<accession>D4GP30</accession>
<feature type="signal peptide" evidence="2">
    <location>
        <begin position="1"/>
        <end position="22"/>
    </location>
</feature>
<feature type="chain" id="PRO_0000428798" description="D-xylose 1-dehydrogenase (NADP(+)) 2">
    <location>
        <begin position="23"/>
        <end position="325"/>
    </location>
</feature>
<name>XDH2_HALVD</name>
<proteinExistence type="evidence at protein level"/>
<organism>
    <name type="scientific">Haloferax volcanii (strain ATCC 29605 / DSM 3757 / JCM 8879 / NBRC 14742 / NCIMB 2012 / VKM B-1768 / DS2)</name>
    <name type="common">Halobacterium volcanii</name>
    <dbReference type="NCBI Taxonomy" id="309800"/>
    <lineage>
        <taxon>Archaea</taxon>
        <taxon>Methanobacteriati</taxon>
        <taxon>Methanobacteriota</taxon>
        <taxon>Stenosarchaea group</taxon>
        <taxon>Halobacteria</taxon>
        <taxon>Halobacteriales</taxon>
        <taxon>Haloferacaceae</taxon>
        <taxon>Haloferax</taxon>
    </lineage>
</organism>
<geneLocation type="plasmid">
    <name>pHV3</name>
</geneLocation>
<protein>
    <recommendedName>
        <fullName>D-xylose 1-dehydrogenase (NADP(+)) 2</fullName>
        <shortName>XDH 2</shortName>
        <ecNumber>1.1.1.179</ecNumber>
    </recommendedName>
</protein>
<comment type="function">
    <text evidence="3">NADP-dependent D-xylose dehydrogenase involved in the degradation of D-xylose, a major component of hemicelluloses such as xylan. Even if it shows D-xylose dehydrogenase activity, it is not essential for D-xylose degradation.</text>
</comment>
<comment type="catalytic activity">
    <reaction evidence="3">
        <text>D-xylose + NADP(+) = D-xylono-1,5-lactone + NADPH + H(+)</text>
        <dbReference type="Rhea" id="RHEA:22000"/>
        <dbReference type="ChEBI" id="CHEBI:15378"/>
        <dbReference type="ChEBI" id="CHEBI:15867"/>
        <dbReference type="ChEBI" id="CHEBI:53455"/>
        <dbReference type="ChEBI" id="CHEBI:57783"/>
        <dbReference type="ChEBI" id="CHEBI:58349"/>
        <dbReference type="EC" id="1.1.1.179"/>
    </reaction>
</comment>
<comment type="biophysicochemical properties">
    <kinetics>
        <KM evidence="3">89 mM for D-xylose</KM>
        <KM evidence="3">0.75 mM for NADP</KM>
    </kinetics>
</comment>
<comment type="subunit">
    <text evidence="1">Homotetramer.</text>
</comment>
<comment type="subcellular location">
    <subcellularLocation>
        <location evidence="4">Secreted</location>
    </subcellularLocation>
</comment>
<comment type="induction">
    <text evidence="3">Expression is highly induced during growth on D-xylose.</text>
</comment>
<comment type="disruption phenotype">
    <text evidence="3">Does not affect growth on D-xylose as sole energy and carbon substrate.</text>
</comment>
<comment type="similarity">
    <text evidence="4">Belongs to the Gfo/Idh/MocA family.</text>
</comment>
<sequence length="325" mass="34719">MMFGILGTAGIGVKSVIPAVQASEHEAAAIASRDEARASAVADELGIPTAYGSYEALLADDSLDAVYIPLPNGLHADWVRAAADRGLHVLCEKPLTASADETAAVFDYCEDAGVTLMEAFMYRFHPLTERAAELVASELGAVVSVTSNFSFRLPDGADDIRIDPDLAGGSVMDVGCYAVSAARLFLGTPDRVYATTTDTRDCGVDTRMSGVLEYDSGATARVESSFDTPETQYYRVQTTDGRLEANPAFNVDPTAAAELTYATDGRVVTETFDPTDSYRREVEAFARAVETGETPRVDREESVSVMRTIDAIYESAETGAAVELD</sequence>
<gene>
    <name type="ordered locus">HVO_B0029</name>
    <name type="ORF">C498_01610</name>
</gene>
<reference key="1">
    <citation type="journal article" date="2010" name="PLoS ONE">
        <title>The complete genome sequence of Haloferax volcanii DS2, a model archaeon.</title>
        <authorList>
            <person name="Hartman A.L."/>
            <person name="Norais C."/>
            <person name="Badger J.H."/>
            <person name="Delmas S."/>
            <person name="Haldenby S."/>
            <person name="Madupu R."/>
            <person name="Robinson J."/>
            <person name="Khouri H."/>
            <person name="Ren Q."/>
            <person name="Lowe T.M."/>
            <person name="Maupin-Furlow J."/>
            <person name="Pohlschroder M."/>
            <person name="Daniels C."/>
            <person name="Pfeiffer F."/>
            <person name="Allers T."/>
            <person name="Eisen J.A."/>
        </authorList>
    </citation>
    <scope>NUCLEOTIDE SEQUENCE [LARGE SCALE GENOMIC DNA]</scope>
    <source>
        <strain>ATCC 29605 / DSM 3757 / JCM 8879 / NBRC 14742 / NCIMB 2012 / VKM B-1768 / DS2</strain>
    </source>
</reference>
<reference key="2">
    <citation type="journal article" date="2014" name="PLoS Genet.">
        <title>Phylogenetically driven sequencing of extremely halophilic archaea reveals strategies for static and dynamic osmo-response.</title>
        <authorList>
            <person name="Becker E.A."/>
            <person name="Seitzer P.M."/>
            <person name="Tritt A."/>
            <person name="Larsen D."/>
            <person name="Krusor M."/>
            <person name="Yao A.I."/>
            <person name="Wu D."/>
            <person name="Madern D."/>
            <person name="Eisen J.A."/>
            <person name="Darling A.E."/>
            <person name="Facciotti M.T."/>
        </authorList>
    </citation>
    <scope>NUCLEOTIDE SEQUENCE [LARGE SCALE GENOMIC DNA]</scope>
    <source>
        <strain>ATCC 29605 / DSM 3757 / JCM 8879 / NBRC 14742 / NCIMB 2012 / VKM B-1768 / DS2</strain>
    </source>
</reference>
<reference key="3">
    <citation type="journal article" date="2009" name="J. Biol. Chem.">
        <title>D-xylose degradation pathway in the halophilic archaeon Haloferax volcanii.</title>
        <authorList>
            <person name="Johnsen U."/>
            <person name="Dambeck M."/>
            <person name="Zaiss H."/>
            <person name="Fuhrer T."/>
            <person name="Soppa J."/>
            <person name="Sauer U."/>
            <person name="Schonheit P."/>
        </authorList>
    </citation>
    <scope>FUNCTION</scope>
    <scope>CATALYTIC ACTIVITY</scope>
    <scope>BIOPHYSICOCHEMICAL PROPERTIES</scope>
    <scope>INDUCTION</scope>
    <scope>DISRUPTION PHENOTYPE</scope>
    <source>
        <strain>DS2 / DS70</strain>
    </source>
</reference>
<keyword id="KW-0521">NADP</keyword>
<keyword id="KW-0560">Oxidoreductase</keyword>
<keyword id="KW-0614">Plasmid</keyword>
<keyword id="KW-1185">Reference proteome</keyword>
<keyword id="KW-0964">Secreted</keyword>
<keyword id="KW-0732">Signal</keyword>
<dbReference type="EC" id="1.1.1.179"/>
<dbReference type="EMBL" id="CP001953">
    <property type="protein sequence ID" value="ADE01305.1"/>
    <property type="molecule type" value="Genomic_DNA"/>
</dbReference>
<dbReference type="EMBL" id="AOHU01000021">
    <property type="protein sequence ID" value="ELY36802.1"/>
    <property type="molecule type" value="Genomic_DNA"/>
</dbReference>
<dbReference type="RefSeq" id="WP_004041125.1">
    <property type="nucleotide sequence ID" value="NC_013964.1"/>
</dbReference>
<dbReference type="SMR" id="D4GP30"/>
<dbReference type="PaxDb" id="309800-C498_01610"/>
<dbReference type="EnsemblBacteria" id="ADE01305">
    <property type="protein sequence ID" value="ADE01305"/>
    <property type="gene ID" value="HVO_B0029"/>
</dbReference>
<dbReference type="GeneID" id="8919277"/>
<dbReference type="KEGG" id="hvo:HVO_B0029"/>
<dbReference type="PATRIC" id="fig|309800.29.peg.308"/>
<dbReference type="eggNOG" id="arCOG01622">
    <property type="taxonomic scope" value="Archaea"/>
</dbReference>
<dbReference type="HOGENOM" id="CLU_023194_5_0_2"/>
<dbReference type="OrthoDB" id="25239at2157"/>
<dbReference type="BRENDA" id="1.1.1.179">
    <property type="organism ID" value="2561"/>
</dbReference>
<dbReference type="SABIO-RK" id="D4GP30"/>
<dbReference type="Proteomes" id="UP000008243">
    <property type="component" value="Plasmid pHV3"/>
</dbReference>
<dbReference type="Proteomes" id="UP000011532">
    <property type="component" value="Unassembled WGS sequence"/>
</dbReference>
<dbReference type="GO" id="GO:0005576">
    <property type="term" value="C:extracellular region"/>
    <property type="evidence" value="ECO:0007669"/>
    <property type="project" value="UniProtKB-SubCell"/>
</dbReference>
<dbReference type="GO" id="GO:0047837">
    <property type="term" value="F:D-xylose 1-dehydrogenase (NADP+) activity"/>
    <property type="evidence" value="ECO:0007669"/>
    <property type="project" value="UniProtKB-EC"/>
</dbReference>
<dbReference type="GO" id="GO:0000166">
    <property type="term" value="F:nucleotide binding"/>
    <property type="evidence" value="ECO:0007669"/>
    <property type="project" value="InterPro"/>
</dbReference>
<dbReference type="Gene3D" id="3.30.360.10">
    <property type="entry name" value="Dihydrodipicolinate Reductase, domain 2"/>
    <property type="match status" value="1"/>
</dbReference>
<dbReference type="Gene3D" id="3.40.50.720">
    <property type="entry name" value="NAD(P)-binding Rossmann-like Domain"/>
    <property type="match status" value="1"/>
</dbReference>
<dbReference type="InterPro" id="IPR000683">
    <property type="entry name" value="Gfo/Idh/MocA-like_OxRdtase_N"/>
</dbReference>
<dbReference type="InterPro" id="IPR050984">
    <property type="entry name" value="Gfo/Idh/MocA_domain"/>
</dbReference>
<dbReference type="InterPro" id="IPR055170">
    <property type="entry name" value="GFO_IDH_MocA-like_dom"/>
</dbReference>
<dbReference type="InterPro" id="IPR036291">
    <property type="entry name" value="NAD(P)-bd_dom_sf"/>
</dbReference>
<dbReference type="PANTHER" id="PTHR22604">
    <property type="entry name" value="OXIDOREDUCTASES"/>
    <property type="match status" value="1"/>
</dbReference>
<dbReference type="PANTHER" id="PTHR22604:SF105">
    <property type="entry name" value="TRANS-1,2-DIHYDROBENZENE-1,2-DIOL DEHYDROGENASE"/>
    <property type="match status" value="1"/>
</dbReference>
<dbReference type="Pfam" id="PF01408">
    <property type="entry name" value="GFO_IDH_MocA"/>
    <property type="match status" value="1"/>
</dbReference>
<dbReference type="Pfam" id="PF22725">
    <property type="entry name" value="GFO_IDH_MocA_C3"/>
    <property type="match status" value="1"/>
</dbReference>
<dbReference type="SUPFAM" id="SSF55347">
    <property type="entry name" value="Glyceraldehyde-3-phosphate dehydrogenase-like, C-terminal domain"/>
    <property type="match status" value="1"/>
</dbReference>
<dbReference type="SUPFAM" id="SSF51735">
    <property type="entry name" value="NAD(P)-binding Rossmann-fold domains"/>
    <property type="match status" value="1"/>
</dbReference>
<evidence type="ECO:0000250" key="1"/>
<evidence type="ECO:0000255" key="2"/>
<evidence type="ECO:0000269" key="3">
    <source>
    </source>
</evidence>
<evidence type="ECO:0000305" key="4"/>